<sequence length="238" mass="27081">MEEEFPTISLLGIDFNLSNILMITVTCVIVLLIAIICTRNLQRRPTGKQNFIEWVMDFVRGIINSNMDWKTGGRFHVLGITLLMFIFVANMLGLPFQIAINDEVWWRSPTADPIVTLTLAIMVLGLTHYYGIKMRGFKHYFVGTYFSPMKFLFPLKLVEEFANTLTLGLRLYGNIFAGEVLLTIIATQLAHMNIFVGVLAIIPALLWQGFSIFIGAIQAYIFTMLTMVYMSHKVSDEH</sequence>
<comment type="function">
    <text evidence="1">Key component of the proton channel; it plays a direct role in the translocation of protons across the membrane.</text>
</comment>
<comment type="subunit">
    <text evidence="1">F-type ATPases have 2 components, CF(1) - the catalytic core - and CF(0) - the membrane proton channel. CF(1) has five subunits: alpha(3), beta(3), gamma(1), delta(1), epsilon(1). CF(0) has three main subunits: a(1), b(2) and c(9-12). The alpha and beta chains form an alternating ring which encloses part of the gamma chain. CF(1) is attached to CF(0) by a central stalk formed by the gamma and epsilon chains, while a peripheral stalk is formed by the delta and b chains.</text>
</comment>
<comment type="subcellular location">
    <subcellularLocation>
        <location evidence="1">Cell membrane</location>
        <topology evidence="1">Multi-pass membrane protein</topology>
    </subcellularLocation>
</comment>
<comment type="similarity">
    <text evidence="1">Belongs to the ATPase A chain family.</text>
</comment>
<proteinExistence type="inferred from homology"/>
<feature type="chain" id="PRO_1000215148" description="ATP synthase subunit a">
    <location>
        <begin position="1"/>
        <end position="238"/>
    </location>
</feature>
<feature type="transmembrane region" description="Helical" evidence="1">
    <location>
        <begin position="17"/>
        <end position="37"/>
    </location>
</feature>
<feature type="transmembrane region" description="Helical" evidence="1">
    <location>
        <begin position="80"/>
        <end position="100"/>
    </location>
</feature>
<feature type="transmembrane region" description="Helical" evidence="1">
    <location>
        <begin position="112"/>
        <end position="132"/>
    </location>
</feature>
<feature type="transmembrane region" description="Helical" evidence="1">
    <location>
        <begin position="194"/>
        <end position="214"/>
    </location>
</feature>
<evidence type="ECO:0000255" key="1">
    <source>
        <dbReference type="HAMAP-Rule" id="MF_01393"/>
    </source>
</evidence>
<gene>
    <name evidence="1" type="primary">atpB</name>
    <name type="ordered locus">Lm4b_02504</name>
</gene>
<accession>C1KYV2</accession>
<protein>
    <recommendedName>
        <fullName evidence="1">ATP synthase subunit a</fullName>
    </recommendedName>
    <alternativeName>
        <fullName evidence="1">ATP synthase F0 sector subunit a</fullName>
    </alternativeName>
    <alternativeName>
        <fullName evidence="1">F-ATPase subunit 6</fullName>
    </alternativeName>
</protein>
<reference key="1">
    <citation type="journal article" date="2012" name="BMC Genomics">
        <title>Comparative genomics and transcriptomics of lineages I, II, and III strains of Listeria monocytogenes.</title>
        <authorList>
            <person name="Hain T."/>
            <person name="Ghai R."/>
            <person name="Billion A."/>
            <person name="Kuenne C.T."/>
            <person name="Steinweg C."/>
            <person name="Izar B."/>
            <person name="Mohamed W."/>
            <person name="Mraheil M."/>
            <person name="Domann E."/>
            <person name="Schaffrath S."/>
            <person name="Karst U."/>
            <person name="Goesmann A."/>
            <person name="Oehm S."/>
            <person name="Puhler A."/>
            <person name="Merkl R."/>
            <person name="Vorwerk S."/>
            <person name="Glaser P."/>
            <person name="Garrido P."/>
            <person name="Rusniok C."/>
            <person name="Buchrieser C."/>
            <person name="Goebel W."/>
            <person name="Chakraborty T."/>
        </authorList>
    </citation>
    <scope>NUCLEOTIDE SEQUENCE [LARGE SCALE GENOMIC DNA]</scope>
    <source>
        <strain>CLIP80459</strain>
    </source>
</reference>
<organism>
    <name type="scientific">Listeria monocytogenes serotype 4b (strain CLIP80459)</name>
    <dbReference type="NCBI Taxonomy" id="568819"/>
    <lineage>
        <taxon>Bacteria</taxon>
        <taxon>Bacillati</taxon>
        <taxon>Bacillota</taxon>
        <taxon>Bacilli</taxon>
        <taxon>Bacillales</taxon>
        <taxon>Listeriaceae</taxon>
        <taxon>Listeria</taxon>
    </lineage>
</organism>
<name>ATP6_LISMC</name>
<keyword id="KW-0066">ATP synthesis</keyword>
<keyword id="KW-1003">Cell membrane</keyword>
<keyword id="KW-0138">CF(0)</keyword>
<keyword id="KW-0375">Hydrogen ion transport</keyword>
<keyword id="KW-0406">Ion transport</keyword>
<keyword id="KW-0472">Membrane</keyword>
<keyword id="KW-0812">Transmembrane</keyword>
<keyword id="KW-1133">Transmembrane helix</keyword>
<keyword id="KW-0813">Transport</keyword>
<dbReference type="EMBL" id="FM242711">
    <property type="protein sequence ID" value="CAS06259.1"/>
    <property type="molecule type" value="Genomic_DNA"/>
</dbReference>
<dbReference type="RefSeq" id="WP_003723468.1">
    <property type="nucleotide sequence ID" value="NC_012488.1"/>
</dbReference>
<dbReference type="SMR" id="C1KYV2"/>
<dbReference type="GeneID" id="93235942"/>
<dbReference type="KEGG" id="lmc:Lm4b_02504"/>
<dbReference type="HOGENOM" id="CLU_041018_2_3_9"/>
<dbReference type="GO" id="GO:0005886">
    <property type="term" value="C:plasma membrane"/>
    <property type="evidence" value="ECO:0007669"/>
    <property type="project" value="UniProtKB-SubCell"/>
</dbReference>
<dbReference type="GO" id="GO:0045259">
    <property type="term" value="C:proton-transporting ATP synthase complex"/>
    <property type="evidence" value="ECO:0007669"/>
    <property type="project" value="UniProtKB-KW"/>
</dbReference>
<dbReference type="GO" id="GO:0046933">
    <property type="term" value="F:proton-transporting ATP synthase activity, rotational mechanism"/>
    <property type="evidence" value="ECO:0007669"/>
    <property type="project" value="UniProtKB-UniRule"/>
</dbReference>
<dbReference type="GO" id="GO:0042777">
    <property type="term" value="P:proton motive force-driven plasma membrane ATP synthesis"/>
    <property type="evidence" value="ECO:0007669"/>
    <property type="project" value="TreeGrafter"/>
</dbReference>
<dbReference type="CDD" id="cd00310">
    <property type="entry name" value="ATP-synt_Fo_a_6"/>
    <property type="match status" value="1"/>
</dbReference>
<dbReference type="FunFam" id="1.20.120.220:FF:000005">
    <property type="entry name" value="ATP synthase subunit a"/>
    <property type="match status" value="1"/>
</dbReference>
<dbReference type="Gene3D" id="1.20.120.220">
    <property type="entry name" value="ATP synthase, F0 complex, subunit A"/>
    <property type="match status" value="1"/>
</dbReference>
<dbReference type="HAMAP" id="MF_01393">
    <property type="entry name" value="ATP_synth_a_bact"/>
    <property type="match status" value="1"/>
</dbReference>
<dbReference type="InterPro" id="IPR045082">
    <property type="entry name" value="ATP_syn_F0_a_bact/chloroplast"/>
</dbReference>
<dbReference type="InterPro" id="IPR000568">
    <property type="entry name" value="ATP_synth_F0_asu"/>
</dbReference>
<dbReference type="InterPro" id="IPR023011">
    <property type="entry name" value="ATP_synth_F0_asu_AS"/>
</dbReference>
<dbReference type="InterPro" id="IPR035908">
    <property type="entry name" value="F0_ATP_A_sf"/>
</dbReference>
<dbReference type="NCBIfam" id="TIGR01131">
    <property type="entry name" value="ATP_synt_6_or_A"/>
    <property type="match status" value="1"/>
</dbReference>
<dbReference type="NCBIfam" id="NF004479">
    <property type="entry name" value="PRK05815.1-4"/>
    <property type="match status" value="1"/>
</dbReference>
<dbReference type="PANTHER" id="PTHR42823">
    <property type="entry name" value="ATP SYNTHASE SUBUNIT A, CHLOROPLASTIC"/>
    <property type="match status" value="1"/>
</dbReference>
<dbReference type="PANTHER" id="PTHR42823:SF3">
    <property type="entry name" value="ATP SYNTHASE SUBUNIT A, CHLOROPLASTIC"/>
    <property type="match status" value="1"/>
</dbReference>
<dbReference type="Pfam" id="PF00119">
    <property type="entry name" value="ATP-synt_A"/>
    <property type="match status" value="1"/>
</dbReference>
<dbReference type="PRINTS" id="PR00123">
    <property type="entry name" value="ATPASEA"/>
</dbReference>
<dbReference type="SUPFAM" id="SSF81336">
    <property type="entry name" value="F1F0 ATP synthase subunit A"/>
    <property type="match status" value="1"/>
</dbReference>
<dbReference type="PROSITE" id="PS00449">
    <property type="entry name" value="ATPASE_A"/>
    <property type="match status" value="1"/>
</dbReference>